<reference key="1">
    <citation type="journal article" date="2010" name="Genome Biol. Evol.">
        <title>Continuing evolution of Burkholderia mallei through genome reduction and large-scale rearrangements.</title>
        <authorList>
            <person name="Losada L."/>
            <person name="Ronning C.M."/>
            <person name="DeShazer D."/>
            <person name="Woods D."/>
            <person name="Fedorova N."/>
            <person name="Kim H.S."/>
            <person name="Shabalina S.A."/>
            <person name="Pearson T.R."/>
            <person name="Brinkac L."/>
            <person name="Tan P."/>
            <person name="Nandi T."/>
            <person name="Crabtree J."/>
            <person name="Badger J."/>
            <person name="Beckstrom-Sternberg S."/>
            <person name="Saqib M."/>
            <person name="Schutzer S.E."/>
            <person name="Keim P."/>
            <person name="Nierman W.C."/>
        </authorList>
    </citation>
    <scope>NUCLEOTIDE SEQUENCE [LARGE SCALE GENOMIC DNA]</scope>
    <source>
        <strain>NCTC 10247</strain>
    </source>
</reference>
<feature type="chain" id="PRO_1000052022" description="Large ribosomal subunit protein uL3">
    <location>
        <begin position="1"/>
        <end position="219"/>
    </location>
</feature>
<feature type="region of interest" description="Disordered" evidence="2">
    <location>
        <begin position="133"/>
        <end position="153"/>
    </location>
</feature>
<feature type="modified residue" description="N5-methylglutamine" evidence="1">
    <location>
        <position position="153"/>
    </location>
</feature>
<keyword id="KW-0488">Methylation</keyword>
<keyword id="KW-0687">Ribonucleoprotein</keyword>
<keyword id="KW-0689">Ribosomal protein</keyword>
<keyword id="KW-0694">RNA-binding</keyword>
<keyword id="KW-0699">rRNA-binding</keyword>
<accession>A3MRV4</accession>
<sequence>MSLGLVGRKVGMTRIFTAEGDSIPVTVLDVSDNRVTQIKTVETDGYTAVQVAFGSRRASRVTKPLAGHLAKAGVEAGEILKEFRIEADKAAELSNGAVIGPDLFEVGQKVDVQGVSIGKGYAGTIKRYNFGSGRASHGNSRSHNVPGSIGMAQDPGRVFPGKRMTGHMGDETVTVQNLEIARIDADRKLLLVKGAVPGAKGGKVFVTPAVKTRAVKGAK</sequence>
<organism>
    <name type="scientific">Burkholderia mallei (strain NCTC 10247)</name>
    <dbReference type="NCBI Taxonomy" id="320389"/>
    <lineage>
        <taxon>Bacteria</taxon>
        <taxon>Pseudomonadati</taxon>
        <taxon>Pseudomonadota</taxon>
        <taxon>Betaproteobacteria</taxon>
        <taxon>Burkholderiales</taxon>
        <taxon>Burkholderiaceae</taxon>
        <taxon>Burkholderia</taxon>
        <taxon>pseudomallei group</taxon>
    </lineage>
</organism>
<gene>
    <name evidence="1" type="primary">rplC</name>
    <name type="ordered locus">BMA10247_3478</name>
</gene>
<proteinExistence type="inferred from homology"/>
<comment type="function">
    <text evidence="1">One of the primary rRNA binding proteins, it binds directly near the 3'-end of the 23S rRNA, where it nucleates assembly of the 50S subunit.</text>
</comment>
<comment type="subunit">
    <text evidence="1">Part of the 50S ribosomal subunit. Forms a cluster with proteins L14 and L19.</text>
</comment>
<comment type="PTM">
    <text evidence="1">Methylated by PrmB.</text>
</comment>
<comment type="similarity">
    <text evidence="1">Belongs to the universal ribosomal protein uL3 family.</text>
</comment>
<protein>
    <recommendedName>
        <fullName evidence="1">Large ribosomal subunit protein uL3</fullName>
    </recommendedName>
    <alternativeName>
        <fullName evidence="3">50S ribosomal protein L3</fullName>
    </alternativeName>
</protein>
<evidence type="ECO:0000255" key="1">
    <source>
        <dbReference type="HAMAP-Rule" id="MF_01325"/>
    </source>
</evidence>
<evidence type="ECO:0000256" key="2">
    <source>
        <dbReference type="SAM" id="MobiDB-lite"/>
    </source>
</evidence>
<evidence type="ECO:0000305" key="3"/>
<dbReference type="EMBL" id="CP000548">
    <property type="protein sequence ID" value="ABO05452.1"/>
    <property type="molecule type" value="Genomic_DNA"/>
</dbReference>
<dbReference type="RefSeq" id="WP_004521904.1">
    <property type="nucleotide sequence ID" value="NZ_CP007802.1"/>
</dbReference>
<dbReference type="SMR" id="A3MRV4"/>
<dbReference type="GeneID" id="93061832"/>
<dbReference type="KEGG" id="bmaz:BM44_3041"/>
<dbReference type="KEGG" id="bmn:BMA10247_3478"/>
<dbReference type="PATRIC" id="fig|320389.8.peg.3413"/>
<dbReference type="GO" id="GO:0022625">
    <property type="term" value="C:cytosolic large ribosomal subunit"/>
    <property type="evidence" value="ECO:0007669"/>
    <property type="project" value="TreeGrafter"/>
</dbReference>
<dbReference type="GO" id="GO:0019843">
    <property type="term" value="F:rRNA binding"/>
    <property type="evidence" value="ECO:0007669"/>
    <property type="project" value="UniProtKB-UniRule"/>
</dbReference>
<dbReference type="GO" id="GO:0003735">
    <property type="term" value="F:structural constituent of ribosome"/>
    <property type="evidence" value="ECO:0007669"/>
    <property type="project" value="InterPro"/>
</dbReference>
<dbReference type="GO" id="GO:0006412">
    <property type="term" value="P:translation"/>
    <property type="evidence" value="ECO:0007669"/>
    <property type="project" value="UniProtKB-UniRule"/>
</dbReference>
<dbReference type="FunFam" id="2.40.30.10:FF:000004">
    <property type="entry name" value="50S ribosomal protein L3"/>
    <property type="match status" value="1"/>
</dbReference>
<dbReference type="FunFam" id="3.30.160.810:FF:000001">
    <property type="entry name" value="50S ribosomal protein L3"/>
    <property type="match status" value="1"/>
</dbReference>
<dbReference type="Gene3D" id="3.30.160.810">
    <property type="match status" value="1"/>
</dbReference>
<dbReference type="Gene3D" id="2.40.30.10">
    <property type="entry name" value="Translation factors"/>
    <property type="match status" value="1"/>
</dbReference>
<dbReference type="HAMAP" id="MF_01325_B">
    <property type="entry name" value="Ribosomal_uL3_B"/>
    <property type="match status" value="1"/>
</dbReference>
<dbReference type="InterPro" id="IPR000597">
    <property type="entry name" value="Ribosomal_uL3"/>
</dbReference>
<dbReference type="InterPro" id="IPR019927">
    <property type="entry name" value="Ribosomal_uL3_bac/org-type"/>
</dbReference>
<dbReference type="InterPro" id="IPR019926">
    <property type="entry name" value="Ribosomal_uL3_CS"/>
</dbReference>
<dbReference type="InterPro" id="IPR009000">
    <property type="entry name" value="Transl_B-barrel_sf"/>
</dbReference>
<dbReference type="NCBIfam" id="TIGR03625">
    <property type="entry name" value="L3_bact"/>
    <property type="match status" value="1"/>
</dbReference>
<dbReference type="PANTHER" id="PTHR11229">
    <property type="entry name" value="50S RIBOSOMAL PROTEIN L3"/>
    <property type="match status" value="1"/>
</dbReference>
<dbReference type="PANTHER" id="PTHR11229:SF16">
    <property type="entry name" value="LARGE RIBOSOMAL SUBUNIT PROTEIN UL3C"/>
    <property type="match status" value="1"/>
</dbReference>
<dbReference type="Pfam" id="PF00297">
    <property type="entry name" value="Ribosomal_L3"/>
    <property type="match status" value="1"/>
</dbReference>
<dbReference type="SUPFAM" id="SSF50447">
    <property type="entry name" value="Translation proteins"/>
    <property type="match status" value="1"/>
</dbReference>
<dbReference type="PROSITE" id="PS00474">
    <property type="entry name" value="RIBOSOMAL_L3"/>
    <property type="match status" value="1"/>
</dbReference>
<name>RL3_BURM7</name>